<feature type="chain" id="PRO_0000204806" description="Aminoglycoside 3'-phosphotransferase">
    <location>
        <begin position="1"/>
        <end position="263"/>
    </location>
</feature>
<feature type="active site" description="Proton acceptor" evidence="1">
    <location>
        <position position="189"/>
    </location>
</feature>
<proteinExistence type="inferred from homology"/>
<reference key="1">
    <citation type="journal article" date="1983" name="Mol. Biol. Evol.">
        <title>Evolution of antibiotic resistance genes: the DNA sequence of a kanamycin resistance gene from Staphylococcus aureus.</title>
        <authorList>
            <person name="Gray G.S."/>
            <person name="Fitch W.M."/>
        </authorList>
    </citation>
    <scope>NUCLEOTIDE SEQUENCE [GENOMIC DNA]</scope>
</reference>
<comment type="function">
    <text>Resistance to kanamycin and structurally-related aminoglycosides, including amikacin.</text>
</comment>
<comment type="catalytic activity">
    <reaction>
        <text>kanamycin A + ATP = kanamycin 3'-phosphate + ADP + H(+)</text>
        <dbReference type="Rhea" id="RHEA:24256"/>
        <dbReference type="ChEBI" id="CHEBI:15378"/>
        <dbReference type="ChEBI" id="CHEBI:30616"/>
        <dbReference type="ChEBI" id="CHEBI:57909"/>
        <dbReference type="ChEBI" id="CHEBI:58214"/>
        <dbReference type="ChEBI" id="CHEBI:456216"/>
        <dbReference type="EC" id="2.7.1.95"/>
    </reaction>
</comment>
<comment type="similarity">
    <text evidence="2">Belongs to the aminoglycoside phosphotransferase family.</text>
</comment>
<dbReference type="EC" id="2.7.1.95"/>
<dbReference type="EMBL" id="M36771">
    <property type="protein sequence ID" value="AAA26596.1"/>
    <property type="molecule type" value="Genomic_DNA"/>
</dbReference>
<dbReference type="PIR" id="A26220">
    <property type="entry name" value="PKSAF"/>
</dbReference>
<dbReference type="BMRB" id="P0A3Y6"/>
<dbReference type="SMR" id="P0A3Y6"/>
<dbReference type="GO" id="GO:0005524">
    <property type="term" value="F:ATP binding"/>
    <property type="evidence" value="ECO:0007669"/>
    <property type="project" value="UniProtKB-KW"/>
</dbReference>
<dbReference type="GO" id="GO:0008910">
    <property type="term" value="F:kanamycin kinase activity"/>
    <property type="evidence" value="ECO:0007669"/>
    <property type="project" value="UniProtKB-EC"/>
</dbReference>
<dbReference type="GO" id="GO:0046677">
    <property type="term" value="P:response to antibiotic"/>
    <property type="evidence" value="ECO:0007669"/>
    <property type="project" value="UniProtKB-KW"/>
</dbReference>
<dbReference type="CDD" id="cd05150">
    <property type="entry name" value="APH"/>
    <property type="match status" value="1"/>
</dbReference>
<dbReference type="Gene3D" id="3.90.1200.10">
    <property type="match status" value="1"/>
</dbReference>
<dbReference type="Gene3D" id="3.30.200.20">
    <property type="entry name" value="Phosphorylase Kinase, domain 1"/>
    <property type="match status" value="1"/>
</dbReference>
<dbReference type="InterPro" id="IPR051678">
    <property type="entry name" value="AGP_Transferase"/>
</dbReference>
<dbReference type="InterPro" id="IPR002575">
    <property type="entry name" value="Aminoglycoside_PTrfase"/>
</dbReference>
<dbReference type="InterPro" id="IPR024165">
    <property type="entry name" value="Kan/Strep_kinase"/>
</dbReference>
<dbReference type="InterPro" id="IPR011009">
    <property type="entry name" value="Kinase-like_dom_sf"/>
</dbReference>
<dbReference type="NCBIfam" id="NF033068">
    <property type="entry name" value="APH_3p"/>
    <property type="match status" value="1"/>
</dbReference>
<dbReference type="NCBIfam" id="NF033064">
    <property type="entry name" value="APH_3p_IIIa"/>
    <property type="match status" value="1"/>
</dbReference>
<dbReference type="PANTHER" id="PTHR21310:SF41">
    <property type="entry name" value="3'-PHOSPHOTRANSFERASE, PUTATIVE-RELATED"/>
    <property type="match status" value="1"/>
</dbReference>
<dbReference type="PANTHER" id="PTHR21310">
    <property type="entry name" value="AMINOGLYCOSIDE PHOSPHOTRANSFERASE-RELATED-RELATED"/>
    <property type="match status" value="1"/>
</dbReference>
<dbReference type="Pfam" id="PF01636">
    <property type="entry name" value="APH"/>
    <property type="match status" value="1"/>
</dbReference>
<dbReference type="PIRSF" id="PIRSF000706">
    <property type="entry name" value="Kanamycin_kin"/>
    <property type="match status" value="1"/>
</dbReference>
<dbReference type="SUPFAM" id="SSF56112">
    <property type="entry name" value="Protein kinase-like (PK-like)"/>
    <property type="match status" value="1"/>
</dbReference>
<organism>
    <name type="scientific">Staphylococcus aureus</name>
    <dbReference type="NCBI Taxonomy" id="1280"/>
    <lineage>
        <taxon>Bacteria</taxon>
        <taxon>Bacillati</taxon>
        <taxon>Bacillota</taxon>
        <taxon>Bacilli</taxon>
        <taxon>Bacillales</taxon>
        <taxon>Staphylococcaceae</taxon>
        <taxon>Staphylococcus</taxon>
    </lineage>
</organism>
<name>KKA3_STAAU</name>
<keyword id="KW-0046">Antibiotic resistance</keyword>
<keyword id="KW-0067">ATP-binding</keyword>
<keyword id="KW-0418">Kinase</keyword>
<keyword id="KW-0547">Nucleotide-binding</keyword>
<keyword id="KW-0808">Transferase</keyword>
<sequence length="263" mass="30901">MAKMRISPELKKLIEKYRCVKDTEGMSPAKVYKLGENENLYLKMTDSRYKGTTYDVEREKDMMLWLEGKLPVPKVVHFERHDGWSNLLMSEADGVLCSEEYEDEQSPEKIIELYAECIRLFHSIDISDCPYTNSLDSRLAELDYLLNNDLADVDCENWEEDTPFKDPRELYDFLKTEKPEEELVFSHGDLGDSKIFVKDGKVSGFIDLGRSGRADKWYDIPFCVRSIREDIGEEQYVELFFDLLGIKPDWEKIKYYILLDELF</sequence>
<evidence type="ECO:0000250" key="1"/>
<evidence type="ECO:0000305" key="2"/>
<accession>P0A3Y6</accession>
<accession>P00554</accession>
<protein>
    <recommendedName>
        <fullName>Aminoglycoside 3'-phosphotransferase</fullName>
        <ecNumber>2.7.1.95</ecNumber>
    </recommendedName>
    <alternativeName>
        <fullName>APH(3')III</fullName>
    </alternativeName>
    <alternativeName>
        <fullName>Kanamycin kinase, type III</fullName>
    </alternativeName>
    <alternativeName>
        <fullName>Neomycin-kanamycin phosphotransferase type III</fullName>
    </alternativeName>
</protein>
<gene>
    <name type="primary">aphA</name>
</gene>